<evidence type="ECO:0000255" key="1">
    <source>
        <dbReference type="HAMAP-Rule" id="MF_00310"/>
    </source>
</evidence>
<accession>B0BBT8</accession>
<keyword id="KW-0066">ATP synthesis</keyword>
<keyword id="KW-0375">Hydrogen ion transport</keyword>
<keyword id="KW-0406">Ion transport</keyword>
<keyword id="KW-0813">Transport</keyword>
<sequence>MQTIYTKITDIKGNLITVEAEGASLGELVQIERADGRSSYASVLRFDARKVTLQVFGGTSGLSTGDKVIFLGRPMEVIYGDSLLGRRFNGTGKPIDHEDECFGEPIPITTPSFNPVCRIVPREMVRTNIPMIDMFNCLVKSQKIPIFSSSGENHNALLMRIAAQTDADIVIIGGMGLTFVDYNFFVEESQRLGFADKCVKFIHKAVDAPVECVLIPDMALACAERFALEQQKNVLVLLTDMTAFADALKEIAITMDQIPANRGYPGSLYSDLAVRYEKAVDIAQGGSITLISVTTMPGDDITHPVPDNTGFITEGQFYLKDNRIDPFGSLSRLKQLVIGKKTREDHGDLANALIRLYADSRKSAERMSMGFKLSNWDKKLLAFSELFEARLMSLEVNIPLEEALDIGWKILSQSFHSEEVGIKEQLIQKYWPKACLHK</sequence>
<feature type="chain" id="PRO_1000115653" description="V-type ATP synthase beta chain">
    <location>
        <begin position="1"/>
        <end position="438"/>
    </location>
</feature>
<name>VATB_CHLTB</name>
<protein>
    <recommendedName>
        <fullName evidence="1">V-type ATP synthase beta chain</fullName>
    </recommendedName>
    <alternativeName>
        <fullName evidence="1">V-ATPase subunit B</fullName>
    </alternativeName>
</protein>
<comment type="function">
    <text evidence="1">Produces ATP from ADP in the presence of a proton gradient across the membrane. The V-type beta chain is a regulatory subunit.</text>
</comment>
<comment type="similarity">
    <text evidence="1">Belongs to the ATPase alpha/beta chains family.</text>
</comment>
<gene>
    <name evidence="1" type="primary">atpB</name>
    <name type="ordered locus">CTLon_0555</name>
</gene>
<dbReference type="EMBL" id="AM884177">
    <property type="protein sequence ID" value="CAP06953.1"/>
    <property type="molecule type" value="Genomic_DNA"/>
</dbReference>
<dbReference type="RefSeq" id="WP_009873712.1">
    <property type="nucleotide sequence ID" value="NC_010280.2"/>
</dbReference>
<dbReference type="SMR" id="B0BBT8"/>
<dbReference type="KEGG" id="ctl:CTLon_0555"/>
<dbReference type="HOGENOM" id="CLU_022916_2_0_0"/>
<dbReference type="Proteomes" id="UP001154401">
    <property type="component" value="Chromosome"/>
</dbReference>
<dbReference type="GO" id="GO:0005524">
    <property type="term" value="F:ATP binding"/>
    <property type="evidence" value="ECO:0007669"/>
    <property type="project" value="UniProtKB-UniRule"/>
</dbReference>
<dbReference type="GO" id="GO:0046933">
    <property type="term" value="F:proton-transporting ATP synthase activity, rotational mechanism"/>
    <property type="evidence" value="ECO:0007669"/>
    <property type="project" value="UniProtKB-UniRule"/>
</dbReference>
<dbReference type="GO" id="GO:0042777">
    <property type="term" value="P:proton motive force-driven plasma membrane ATP synthesis"/>
    <property type="evidence" value="ECO:0007669"/>
    <property type="project" value="UniProtKB-UniRule"/>
</dbReference>
<dbReference type="CDD" id="cd18118">
    <property type="entry name" value="ATP-synt_V_A-type_beta_N"/>
    <property type="match status" value="1"/>
</dbReference>
<dbReference type="CDD" id="cd01135">
    <property type="entry name" value="V_A-ATPase_B"/>
    <property type="match status" value="1"/>
</dbReference>
<dbReference type="Gene3D" id="3.40.50.12240">
    <property type="match status" value="1"/>
</dbReference>
<dbReference type="HAMAP" id="MF_00310">
    <property type="entry name" value="ATP_synth_B_arch"/>
    <property type="match status" value="1"/>
</dbReference>
<dbReference type="InterPro" id="IPR055190">
    <property type="entry name" value="ATP-synt_VA_C"/>
</dbReference>
<dbReference type="InterPro" id="IPR004100">
    <property type="entry name" value="ATPase_F1/V1/A1_a/bsu_N"/>
</dbReference>
<dbReference type="InterPro" id="IPR000194">
    <property type="entry name" value="ATPase_F1/V1/A1_a/bsu_nucl-bd"/>
</dbReference>
<dbReference type="InterPro" id="IPR027417">
    <property type="entry name" value="P-loop_NTPase"/>
</dbReference>
<dbReference type="InterPro" id="IPR022879">
    <property type="entry name" value="V-ATPase_su_B/beta"/>
</dbReference>
<dbReference type="NCBIfam" id="NF002555">
    <property type="entry name" value="PRK02118.1"/>
    <property type="match status" value="1"/>
</dbReference>
<dbReference type="NCBIfam" id="NF003235">
    <property type="entry name" value="PRK04196.1"/>
    <property type="match status" value="1"/>
</dbReference>
<dbReference type="PANTHER" id="PTHR43389">
    <property type="entry name" value="V-TYPE PROTON ATPASE SUBUNIT B"/>
    <property type="match status" value="1"/>
</dbReference>
<dbReference type="PANTHER" id="PTHR43389:SF4">
    <property type="entry name" value="V-TYPE PROTON ATPASE SUBUNIT B"/>
    <property type="match status" value="1"/>
</dbReference>
<dbReference type="Pfam" id="PF00006">
    <property type="entry name" value="ATP-synt_ab"/>
    <property type="match status" value="1"/>
</dbReference>
<dbReference type="Pfam" id="PF02874">
    <property type="entry name" value="ATP-synt_ab_N"/>
    <property type="match status" value="1"/>
</dbReference>
<dbReference type="Pfam" id="PF22919">
    <property type="entry name" value="ATP-synt_VA_C"/>
    <property type="match status" value="1"/>
</dbReference>
<dbReference type="SUPFAM" id="SSF52540">
    <property type="entry name" value="P-loop containing nucleoside triphosphate hydrolases"/>
    <property type="match status" value="1"/>
</dbReference>
<organism>
    <name type="scientific">Chlamydia trachomatis serovar L2b (strain UCH-1/proctitis)</name>
    <dbReference type="NCBI Taxonomy" id="471473"/>
    <lineage>
        <taxon>Bacteria</taxon>
        <taxon>Pseudomonadati</taxon>
        <taxon>Chlamydiota</taxon>
        <taxon>Chlamydiia</taxon>
        <taxon>Chlamydiales</taxon>
        <taxon>Chlamydiaceae</taxon>
        <taxon>Chlamydia/Chlamydophila group</taxon>
        <taxon>Chlamydia</taxon>
    </lineage>
</organism>
<reference key="1">
    <citation type="journal article" date="2008" name="Genome Res.">
        <title>Chlamydia trachomatis: genome sequence analysis of lymphogranuloma venereum isolates.</title>
        <authorList>
            <person name="Thomson N.R."/>
            <person name="Holden M.T.G."/>
            <person name="Carder C."/>
            <person name="Lennard N."/>
            <person name="Lockey S.J."/>
            <person name="Marsh P."/>
            <person name="Skipp P."/>
            <person name="O'Connor C.D."/>
            <person name="Goodhead I."/>
            <person name="Norbertzcak H."/>
            <person name="Harris B."/>
            <person name="Ormond D."/>
            <person name="Rance R."/>
            <person name="Quail M.A."/>
            <person name="Parkhill J."/>
            <person name="Stephens R.S."/>
            <person name="Clarke I.N."/>
        </authorList>
    </citation>
    <scope>NUCLEOTIDE SEQUENCE [LARGE SCALE GENOMIC DNA]</scope>
    <source>
        <strain>UCH-1/proctitis</strain>
    </source>
</reference>
<proteinExistence type="inferred from homology"/>